<organism>
    <name type="scientific">Bacillus subtilis (strain 168)</name>
    <dbReference type="NCBI Taxonomy" id="224308"/>
    <lineage>
        <taxon>Bacteria</taxon>
        <taxon>Bacillati</taxon>
        <taxon>Bacillota</taxon>
        <taxon>Bacilli</taxon>
        <taxon>Bacillales</taxon>
        <taxon>Bacillaceae</taxon>
        <taxon>Bacillus</taxon>
    </lineage>
</organism>
<evidence type="ECO:0000269" key="1">
    <source>
    </source>
</evidence>
<evidence type="ECO:0000269" key="2">
    <source>
    </source>
</evidence>
<evidence type="ECO:0000269" key="3">
    <source>
    </source>
</evidence>
<evidence type="ECO:0000269" key="4">
    <source ref="7"/>
</evidence>
<evidence type="ECO:0000303" key="5">
    <source>
    </source>
</evidence>
<evidence type="ECO:0000305" key="6"/>
<evidence type="ECO:0000305" key="7">
    <source>
    </source>
</evidence>
<evidence type="ECO:0000305" key="8">
    <source ref="7"/>
</evidence>
<evidence type="ECO:0007744" key="9">
    <source>
        <dbReference type="PDB" id="4ALB"/>
    </source>
</evidence>
<evidence type="ECO:0007829" key="10">
    <source>
        <dbReference type="PDB" id="2P8G"/>
    </source>
</evidence>
<sequence>MENFIGSHMIYTYENGWEYEIYIKNDHTIDYRIHSGMVAGRWVRDQEVNIVKLTEGVYKVSWTEPTGTDVSLNFMPNEKRMHGIIFFPKWVHEHPEITVCYQNDHIDLMKESREKYETYPKYVVPEFAEITFLKNEGVDNEEVISKAPYEGMTDDIRAGRL</sequence>
<reference key="1">
    <citation type="submission" date="1997-04" db="EMBL/GenBank/DDBJ databases">
        <authorList>
            <person name="Denizot F."/>
        </authorList>
    </citation>
    <scope>NUCLEOTIDE SEQUENCE [GENOMIC DNA]</scope>
    <source>
        <strain>168</strain>
    </source>
</reference>
<reference key="2">
    <citation type="journal article" date="1998" name="Appl. Environ. Microbiol.">
        <title>Gene cloning, transcriptional analysis, purification, and characterization of phenolic acid decarboxylase from Bacillus subtilis.</title>
        <authorList>
            <person name="Cavin J.-F."/>
            <person name="Dartois V."/>
            <person name="Divies C."/>
        </authorList>
    </citation>
    <scope>NUCLEOTIDE SEQUENCE [GENOMIC DNA]</scope>
    <scope>FUNCTION</scope>
    <scope>CATALYTIC ACTIVITY</scope>
    <scope>SUBUNIT</scope>
    <scope>SUBSTRATE SPECIFICITY</scope>
    <scope>BIOPHYSICOCHEMICAL PROPERTIES</scope>
    <scope>INDUCTION</scope>
    <source>
        <strain>168</strain>
    </source>
</reference>
<reference key="3">
    <citation type="journal article" date="1997" name="Nature">
        <title>The complete genome sequence of the Gram-positive bacterium Bacillus subtilis.</title>
        <authorList>
            <person name="Kunst F."/>
            <person name="Ogasawara N."/>
            <person name="Moszer I."/>
            <person name="Albertini A.M."/>
            <person name="Alloni G."/>
            <person name="Azevedo V."/>
            <person name="Bertero M.G."/>
            <person name="Bessieres P."/>
            <person name="Bolotin A."/>
            <person name="Borchert S."/>
            <person name="Borriss R."/>
            <person name="Boursier L."/>
            <person name="Brans A."/>
            <person name="Braun M."/>
            <person name="Brignell S.C."/>
            <person name="Bron S."/>
            <person name="Brouillet S."/>
            <person name="Bruschi C.V."/>
            <person name="Caldwell B."/>
            <person name="Capuano V."/>
            <person name="Carter N.M."/>
            <person name="Choi S.-K."/>
            <person name="Codani J.-J."/>
            <person name="Connerton I.F."/>
            <person name="Cummings N.J."/>
            <person name="Daniel R.A."/>
            <person name="Denizot F."/>
            <person name="Devine K.M."/>
            <person name="Duesterhoeft A."/>
            <person name="Ehrlich S.D."/>
            <person name="Emmerson P.T."/>
            <person name="Entian K.-D."/>
            <person name="Errington J."/>
            <person name="Fabret C."/>
            <person name="Ferrari E."/>
            <person name="Foulger D."/>
            <person name="Fritz C."/>
            <person name="Fujita M."/>
            <person name="Fujita Y."/>
            <person name="Fuma S."/>
            <person name="Galizzi A."/>
            <person name="Galleron N."/>
            <person name="Ghim S.-Y."/>
            <person name="Glaser P."/>
            <person name="Goffeau A."/>
            <person name="Golightly E.J."/>
            <person name="Grandi G."/>
            <person name="Guiseppi G."/>
            <person name="Guy B.J."/>
            <person name="Haga K."/>
            <person name="Haiech J."/>
            <person name="Harwood C.R."/>
            <person name="Henaut A."/>
            <person name="Hilbert H."/>
            <person name="Holsappel S."/>
            <person name="Hosono S."/>
            <person name="Hullo M.-F."/>
            <person name="Itaya M."/>
            <person name="Jones L.-M."/>
            <person name="Joris B."/>
            <person name="Karamata D."/>
            <person name="Kasahara Y."/>
            <person name="Klaerr-Blanchard M."/>
            <person name="Klein C."/>
            <person name="Kobayashi Y."/>
            <person name="Koetter P."/>
            <person name="Koningstein G."/>
            <person name="Krogh S."/>
            <person name="Kumano M."/>
            <person name="Kurita K."/>
            <person name="Lapidus A."/>
            <person name="Lardinois S."/>
            <person name="Lauber J."/>
            <person name="Lazarevic V."/>
            <person name="Lee S.-M."/>
            <person name="Levine A."/>
            <person name="Liu H."/>
            <person name="Masuda S."/>
            <person name="Mauel C."/>
            <person name="Medigue C."/>
            <person name="Medina N."/>
            <person name="Mellado R.P."/>
            <person name="Mizuno M."/>
            <person name="Moestl D."/>
            <person name="Nakai S."/>
            <person name="Noback M."/>
            <person name="Noone D."/>
            <person name="O'Reilly M."/>
            <person name="Ogawa K."/>
            <person name="Ogiwara A."/>
            <person name="Oudega B."/>
            <person name="Park S.-H."/>
            <person name="Parro V."/>
            <person name="Pohl T.M."/>
            <person name="Portetelle D."/>
            <person name="Porwollik S."/>
            <person name="Prescott A.M."/>
            <person name="Presecan E."/>
            <person name="Pujic P."/>
            <person name="Purnelle B."/>
            <person name="Rapoport G."/>
            <person name="Rey M."/>
            <person name="Reynolds S."/>
            <person name="Rieger M."/>
            <person name="Rivolta C."/>
            <person name="Rocha E."/>
            <person name="Roche B."/>
            <person name="Rose M."/>
            <person name="Sadaie Y."/>
            <person name="Sato T."/>
            <person name="Scanlan E."/>
            <person name="Schleich S."/>
            <person name="Schroeter R."/>
            <person name="Scoffone F."/>
            <person name="Sekiguchi J."/>
            <person name="Sekowska A."/>
            <person name="Seror S.J."/>
            <person name="Serror P."/>
            <person name="Shin B.-S."/>
            <person name="Soldo B."/>
            <person name="Sorokin A."/>
            <person name="Tacconi E."/>
            <person name="Takagi T."/>
            <person name="Takahashi H."/>
            <person name="Takemaru K."/>
            <person name="Takeuchi M."/>
            <person name="Tamakoshi A."/>
            <person name="Tanaka T."/>
            <person name="Terpstra P."/>
            <person name="Tognoni A."/>
            <person name="Tosato V."/>
            <person name="Uchiyama S."/>
            <person name="Vandenbol M."/>
            <person name="Vannier F."/>
            <person name="Vassarotti A."/>
            <person name="Viari A."/>
            <person name="Wambutt R."/>
            <person name="Wedler E."/>
            <person name="Wedler H."/>
            <person name="Weitzenegger T."/>
            <person name="Winters P."/>
            <person name="Wipat A."/>
            <person name="Yamamoto H."/>
            <person name="Yamane K."/>
            <person name="Yasumoto K."/>
            <person name="Yata K."/>
            <person name="Yoshida K."/>
            <person name="Yoshikawa H.-F."/>
            <person name="Zumstein E."/>
            <person name="Yoshikawa H."/>
            <person name="Danchin A."/>
        </authorList>
    </citation>
    <scope>NUCLEOTIDE SEQUENCE [LARGE SCALE GENOMIC DNA]</scope>
    <source>
        <strain>168</strain>
    </source>
</reference>
<reference key="4">
    <citation type="journal article" date="2007" name="Proteomics">
        <title>The proteome and transcriptome analysis of Bacillus subtilis in response to salicylic acid.</title>
        <authorList>
            <person name="Duy N.V."/>
            <person name="Maeder U."/>
            <person name="Tran N.P."/>
            <person name="Cavin J.-F."/>
            <person name="Tam le T."/>
            <person name="Albrecht D."/>
            <person name="Hecker M."/>
            <person name="Antelmann H."/>
        </authorList>
    </citation>
    <scope>INDUCTION</scope>
    <source>
        <strain>168</strain>
    </source>
</reference>
<reference key="5">
    <citation type="journal article" date="2016" name="Appl. Microbiol. Biotechnol.">
        <title>Identification and characterization of the vanillin dehydrogenase YfmT in Bacillus subtilis 3NA.</title>
        <authorList>
            <person name="Graf N."/>
            <person name="Wenzel M."/>
            <person name="Altenbuchner J."/>
        </authorList>
    </citation>
    <scope>DISRUPTION PHENOTYPE</scope>
    <source>
        <strain>168 / 3NA</strain>
    </source>
</reference>
<reference key="6">
    <citation type="submission" date="2009-02" db="PDB data bank">
        <title>Crystal structure of phenolic acid decarboxylase (2635953) from Bacillus subtilis at 1.36 a resolution.</title>
        <authorList>
            <consortium name="Joint center for structural genomics (JCSG)"/>
        </authorList>
    </citation>
    <scope>X-RAY CRYSTALLOGRAPHY (1.36 ANGSTROMS)</scope>
</reference>
<reference evidence="9" key="7">
    <citation type="journal article" date="2012" name="Catal. Sci. Technol.">
        <title>Mutational analysis of phenolic acid cecarboxylase from Bacillus subtilis (BsPAD), which converts bio-derived phenolic acids to styrene derivatives.</title>
        <authorList>
            <person name="Frank A."/>
            <person name="Eborall W."/>
            <person name="Hyde R."/>
            <person name="Hart S."/>
            <person name="Turkenburg J.P."/>
            <person name="Grogan G."/>
        </authorList>
    </citation>
    <scope>X-RAY CRYSTALLOGRAPHY (3.03 ANGSTROMS) IN COMPLEX WITH SUBSTRATE</scope>
    <scope>REACTION MECHANISM</scope>
    <scope>ACTIVE SITE</scope>
    <scope>SUBUNIT</scope>
    <scope>MUTAGENESIS OF 11-TYR--TYR-13; TYR-11; TYR-13; TYR-19; ARG-41; GLU-64; THR-68 AND THR-98</scope>
</reference>
<proteinExistence type="evidence at protein level"/>
<dbReference type="EC" id="4.1.1.102" evidence="3"/>
<dbReference type="EMBL" id="AF017117">
    <property type="protein sequence ID" value="AAC46254.1"/>
    <property type="molecule type" value="Genomic_DNA"/>
</dbReference>
<dbReference type="EMBL" id="Z94043">
    <property type="protein sequence ID" value="CAB08020.1"/>
    <property type="molecule type" value="Genomic_DNA"/>
</dbReference>
<dbReference type="EMBL" id="AL009126">
    <property type="protein sequence ID" value="CAB15445.1"/>
    <property type="molecule type" value="Genomic_DNA"/>
</dbReference>
<dbReference type="PIR" id="D69671">
    <property type="entry name" value="D69671"/>
</dbReference>
<dbReference type="RefSeq" id="NP_391320.1">
    <property type="nucleotide sequence ID" value="NC_000964.3"/>
</dbReference>
<dbReference type="RefSeq" id="WP_003243190.1">
    <property type="nucleotide sequence ID" value="NZ_OZ025638.1"/>
</dbReference>
<dbReference type="PDB" id="2P8G">
    <property type="method" value="X-ray"/>
    <property type="resolution" value="1.36 A"/>
    <property type="chains" value="A=1-161"/>
</dbReference>
<dbReference type="PDB" id="4ALB">
    <property type="method" value="X-ray"/>
    <property type="resolution" value="3.03 A"/>
    <property type="chains" value="A/B/C=1-161"/>
</dbReference>
<dbReference type="PDBsum" id="2P8G"/>
<dbReference type="PDBsum" id="4ALB"/>
<dbReference type="SMR" id="O07006"/>
<dbReference type="FunCoup" id="O07006">
    <property type="interactions" value="48"/>
</dbReference>
<dbReference type="STRING" id="224308.BSU34400"/>
<dbReference type="PaxDb" id="224308-BSU34400"/>
<dbReference type="DNASU" id="938579"/>
<dbReference type="EnsemblBacteria" id="CAB15445">
    <property type="protein sequence ID" value="CAB15445"/>
    <property type="gene ID" value="BSU_34400"/>
</dbReference>
<dbReference type="GeneID" id="938579"/>
<dbReference type="KEGG" id="bsu:BSU34400"/>
<dbReference type="PATRIC" id="fig|224308.179.peg.3727"/>
<dbReference type="eggNOG" id="COG3479">
    <property type="taxonomic scope" value="Bacteria"/>
</dbReference>
<dbReference type="InParanoid" id="O07006"/>
<dbReference type="OrthoDB" id="1623004at2"/>
<dbReference type="PhylomeDB" id="O07006"/>
<dbReference type="BioCyc" id="BSUB:BSU34400-MONOMER"/>
<dbReference type="EvolutionaryTrace" id="O07006"/>
<dbReference type="Proteomes" id="UP000001570">
    <property type="component" value="Chromosome"/>
</dbReference>
<dbReference type="GO" id="GO:0016831">
    <property type="term" value="F:carboxy-lyase activity"/>
    <property type="evidence" value="ECO:0007669"/>
    <property type="project" value="UniProtKB-KW"/>
</dbReference>
<dbReference type="GO" id="GO:0009056">
    <property type="term" value="P:catabolic process"/>
    <property type="evidence" value="ECO:0007669"/>
    <property type="project" value="UniProtKB-KW"/>
</dbReference>
<dbReference type="GO" id="GO:0009636">
    <property type="term" value="P:response to toxic substance"/>
    <property type="evidence" value="ECO:0007669"/>
    <property type="project" value="UniProtKB-KW"/>
</dbReference>
<dbReference type="CDD" id="cd14241">
    <property type="entry name" value="PAD"/>
    <property type="match status" value="1"/>
</dbReference>
<dbReference type="Gene3D" id="2.40.128.20">
    <property type="match status" value="1"/>
</dbReference>
<dbReference type="InterPro" id="IPR012674">
    <property type="entry name" value="Calycin"/>
</dbReference>
<dbReference type="InterPro" id="IPR008729">
    <property type="entry name" value="PA_de_COase"/>
</dbReference>
<dbReference type="PANTHER" id="PTHR40087">
    <property type="entry name" value="PHENOLIC ACID DECARBOXYLASE PADC"/>
    <property type="match status" value="1"/>
</dbReference>
<dbReference type="PANTHER" id="PTHR40087:SF1">
    <property type="entry name" value="PHENOLIC ACID DECARBOXYLASE PADC"/>
    <property type="match status" value="1"/>
</dbReference>
<dbReference type="Pfam" id="PF05870">
    <property type="entry name" value="PA_decarbox"/>
    <property type="match status" value="1"/>
</dbReference>
<dbReference type="PIRSF" id="PIRSF011561">
    <property type="entry name" value="PAD"/>
    <property type="match status" value="1"/>
</dbReference>
<dbReference type="SUPFAM" id="SSF50814">
    <property type="entry name" value="Lipocalins"/>
    <property type="match status" value="1"/>
</dbReference>
<feature type="chain" id="PRO_0000108125" description="Phenolic acid decarboxylase PadC">
    <location>
        <begin position="1"/>
        <end position="161"/>
    </location>
</feature>
<feature type="active site" description="Proton donor" evidence="8">
    <location>
        <position position="19"/>
    </location>
</feature>
<feature type="active site" description="Proton acceptor" evidence="4">
    <location>
        <position position="64"/>
    </location>
</feature>
<feature type="binding site" evidence="4">
    <location>
        <position position="11"/>
    </location>
    <ligand>
        <name>substrate</name>
    </ligand>
</feature>
<feature type="binding site" evidence="4">
    <location>
        <position position="13"/>
    </location>
    <ligand>
        <name>substrate</name>
    </ligand>
</feature>
<feature type="binding site" evidence="4">
    <location>
        <position position="41"/>
    </location>
    <ligand>
        <name>substrate</name>
    </ligand>
</feature>
<feature type="mutagenesis site" description="No ferulic acid decarboxylation." evidence="4">
    <original>YTY</original>
    <variation>FTF</variation>
    <location>
        <begin position="11"/>
        <end position="13"/>
    </location>
</feature>
<feature type="mutagenesis site" description="3% decarboxylation of ferulic acid." evidence="4">
    <original>Y</original>
    <variation>F</variation>
    <location>
        <position position="11"/>
    </location>
</feature>
<feature type="mutagenesis site" description="2% decarboxylation of ferulic acid." evidence="4">
    <original>Y</original>
    <variation>F</variation>
    <location>
        <position position="13"/>
    </location>
</feature>
<feature type="mutagenesis site" description="4% decarboxylation of ferulic acid." evidence="4">
    <original>Y</original>
    <variation>A</variation>
    <location>
        <position position="19"/>
    </location>
</feature>
<feature type="mutagenesis site" description="No ferulic acid decarboxylation." evidence="4">
    <original>R</original>
    <variation>A</variation>
    <location>
        <position position="41"/>
    </location>
</feature>
<feature type="mutagenesis site" description="No ferulic acid decarboxylation." evidence="4">
    <original>E</original>
    <variation>A</variation>
    <location>
        <position position="64"/>
    </location>
</feature>
<feature type="mutagenesis site" description="52% decarboxylation of ferulic acid." evidence="4">
    <original>T</original>
    <variation>V</variation>
    <location>
        <position position="68"/>
    </location>
</feature>
<feature type="mutagenesis site" description="76% decarboxylation of ferulic acid." evidence="4">
    <original>T</original>
    <variation>A</variation>
    <location>
        <position position="98"/>
    </location>
</feature>
<feature type="helix" evidence="10">
    <location>
        <begin position="1"/>
        <end position="4"/>
    </location>
</feature>
<feature type="strand" evidence="10">
    <location>
        <begin position="7"/>
        <end position="12"/>
    </location>
</feature>
<feature type="strand" evidence="10">
    <location>
        <begin position="18"/>
        <end position="25"/>
    </location>
</feature>
<feature type="strand" evidence="10">
    <location>
        <begin position="28"/>
        <end position="33"/>
    </location>
</feature>
<feature type="turn" evidence="10">
    <location>
        <begin position="37"/>
        <end position="40"/>
    </location>
</feature>
<feature type="strand" evidence="10">
    <location>
        <begin position="42"/>
        <end position="47"/>
    </location>
</feature>
<feature type="strand" evidence="10">
    <location>
        <begin position="49"/>
        <end position="54"/>
    </location>
</feature>
<feature type="strand" evidence="10">
    <location>
        <begin position="57"/>
        <end position="63"/>
    </location>
</feature>
<feature type="strand" evidence="10">
    <location>
        <begin position="69"/>
        <end position="75"/>
    </location>
</feature>
<feature type="helix" evidence="10">
    <location>
        <begin position="76"/>
        <end position="78"/>
    </location>
</feature>
<feature type="strand" evidence="10">
    <location>
        <begin position="80"/>
        <end position="87"/>
    </location>
</feature>
<feature type="helix" evidence="10">
    <location>
        <begin position="89"/>
        <end position="93"/>
    </location>
</feature>
<feature type="helix" evidence="10">
    <location>
        <begin position="95"/>
        <end position="98"/>
    </location>
</feature>
<feature type="helix" evidence="10">
    <location>
        <begin position="102"/>
        <end position="104"/>
    </location>
</feature>
<feature type="helix" evidence="10">
    <location>
        <begin position="106"/>
        <end position="115"/>
    </location>
</feature>
<feature type="strand" evidence="10">
    <location>
        <begin position="122"/>
        <end position="135"/>
    </location>
</feature>
<feature type="helix" evidence="10">
    <location>
        <begin position="152"/>
        <end position="158"/>
    </location>
</feature>
<accession>O07006</accession>
<keyword id="KW-0002">3D-structure</keyword>
<keyword id="KW-0058">Aromatic hydrocarbons catabolism</keyword>
<keyword id="KW-0210">Decarboxylase</keyword>
<keyword id="KW-0216">Detoxification</keyword>
<keyword id="KW-0456">Lyase</keyword>
<keyword id="KW-1185">Reference proteome</keyword>
<gene>
    <name type="primary">padC</name>
    <name type="synonym">pad</name>
    <name type="synonym">yveH</name>
    <name type="ordered locus">BSU34400</name>
</gene>
<protein>
    <recommendedName>
        <fullName evidence="5">Phenolic acid decarboxylase PadC</fullName>
        <shortName evidence="5">PAD</shortName>
        <ecNumber evidence="3">4.1.1.102</ecNumber>
    </recommendedName>
</protein>
<comment type="function">
    <text evidence="3">Involved in the decarboxylation and detoxification of phenolic derivatives. It is able to catalyze the decarboxylation of ferulic, p-coumaric and caffeic acids.</text>
</comment>
<comment type="catalytic activity">
    <reaction evidence="3">
        <text>(E)-4-coumarate + H(+) = 4-vinylphenol + CO2</text>
        <dbReference type="Rhea" id="RHEA:33227"/>
        <dbReference type="ChEBI" id="CHEBI:1883"/>
        <dbReference type="ChEBI" id="CHEBI:12876"/>
        <dbReference type="ChEBI" id="CHEBI:15378"/>
        <dbReference type="ChEBI" id="CHEBI:16526"/>
        <dbReference type="EC" id="4.1.1.102"/>
    </reaction>
</comment>
<comment type="catalytic activity">
    <reaction>
        <text>(E)-cinnamate + H(+) = styrene + CO2</text>
        <dbReference type="Rhea" id="RHEA:46920"/>
        <dbReference type="ChEBI" id="CHEBI:15378"/>
        <dbReference type="ChEBI" id="CHEBI:15669"/>
        <dbReference type="ChEBI" id="CHEBI:16526"/>
        <dbReference type="ChEBI" id="CHEBI:27452"/>
        <dbReference type="EC" id="4.1.1.102"/>
    </reaction>
</comment>
<comment type="catalytic activity">
    <reaction evidence="3">
        <text>(E)-ferulate + H(+) = 2-methoxy-4-vinylphenol + CO2</text>
        <dbReference type="Rhea" id="RHEA:33807"/>
        <dbReference type="ChEBI" id="CHEBI:15378"/>
        <dbReference type="ChEBI" id="CHEBI:16526"/>
        <dbReference type="ChEBI" id="CHEBI:29749"/>
        <dbReference type="ChEBI" id="CHEBI:42438"/>
        <dbReference type="EC" id="4.1.1.102"/>
    </reaction>
</comment>
<comment type="biophysicochemical properties">
    <kinetics>
        <KM evidence="3">1.1 mM for ferulic acid</KM>
        <KM evidence="3">1.3 mM for p-coumaric acid</KM>
        <KM evidence="3">2.6 mM for caffeic acid</KM>
        <Vmax evidence="3">280.0 umol/min/mg enzyme for ferulic acid</Vmax>
        <Vmax evidence="3">265.0 umol/min/mg enzyme for p-coumaric acid</Vmax>
        <Vmax evidence="3">180.0 umol/min/mg enzyme for caffeic acid</Vmax>
    </kinetics>
    <phDependence>
        <text evidence="3">Optimum pH is 5.0.</text>
    </phDependence>
    <temperatureDependence>
        <text evidence="3">Optimum temperature is 40-45 degrees Celsius.</text>
    </temperatureDependence>
</comment>
<comment type="subunit">
    <text evidence="7 8">Homodimer.</text>
</comment>
<comment type="induction">
    <text evidence="1 3">By ferulic, p-coumaric and caffeic acids (at protein level) (PubMed:9546183). Cells extracts from caffeic acid-induced cells exhibited lower activity on the three acids, which indicates that caffeic acid could be a less efficient inducer (PubMed:9546183). Up-regulated by salicylate (PubMed:17295427).</text>
</comment>
<comment type="disruption phenotype">
    <text evidence="2">No longer metabolizes ferulic acid (PubMed:26658822).</text>
</comment>
<comment type="similarity">
    <text evidence="6">Belongs to the PadC family.</text>
</comment>
<name>PADC_BACSU</name>